<accession>A5FDF9</accession>
<proteinExistence type="inferred from homology"/>
<organism>
    <name type="scientific">Flavobacterium johnsoniae (strain ATCC 17061 / DSM 2064 / JCM 8514 / BCRC 14874 / CCUG 350202 / NBRC 14942 / NCIMB 11054 / UW101)</name>
    <name type="common">Cytophaga johnsonae</name>
    <dbReference type="NCBI Taxonomy" id="376686"/>
    <lineage>
        <taxon>Bacteria</taxon>
        <taxon>Pseudomonadati</taxon>
        <taxon>Bacteroidota</taxon>
        <taxon>Flavobacteriia</taxon>
        <taxon>Flavobacteriales</taxon>
        <taxon>Flavobacteriaceae</taxon>
        <taxon>Flavobacterium</taxon>
    </lineage>
</organism>
<keyword id="KW-0521">NADP</keyword>
<keyword id="KW-0560">Oxidoreductase</keyword>
<keyword id="KW-0627">Porphyrin biosynthesis</keyword>
<comment type="function">
    <text evidence="1">Catalyzes the NADPH-dependent reduction of glutamyl-tRNA(Glu) to glutamate 1-semialdehyde (GSA).</text>
</comment>
<comment type="catalytic activity">
    <reaction evidence="1">
        <text>(S)-4-amino-5-oxopentanoate + tRNA(Glu) + NADP(+) = L-glutamyl-tRNA(Glu) + NADPH + H(+)</text>
        <dbReference type="Rhea" id="RHEA:12344"/>
        <dbReference type="Rhea" id="RHEA-COMP:9663"/>
        <dbReference type="Rhea" id="RHEA-COMP:9680"/>
        <dbReference type="ChEBI" id="CHEBI:15378"/>
        <dbReference type="ChEBI" id="CHEBI:57501"/>
        <dbReference type="ChEBI" id="CHEBI:57783"/>
        <dbReference type="ChEBI" id="CHEBI:58349"/>
        <dbReference type="ChEBI" id="CHEBI:78442"/>
        <dbReference type="ChEBI" id="CHEBI:78520"/>
        <dbReference type="EC" id="1.2.1.70"/>
    </reaction>
</comment>
<comment type="pathway">
    <text evidence="1">Porphyrin-containing compound metabolism; protoporphyrin-IX biosynthesis; 5-aminolevulinate from L-glutamyl-tRNA(Glu): step 1/2.</text>
</comment>
<comment type="subunit">
    <text evidence="1">Homodimer.</text>
</comment>
<comment type="domain">
    <text evidence="1">Possesses an unusual extended V-shaped dimeric structure with each monomer consisting of three distinct domains arranged along a curved 'spinal' alpha-helix. The N-terminal catalytic domain specifically recognizes the glutamate moiety of the substrate. The second domain is the NADPH-binding domain, and the third C-terminal domain is responsible for dimerization.</text>
</comment>
<comment type="miscellaneous">
    <text evidence="1">During catalysis, the active site Cys acts as a nucleophile attacking the alpha-carbonyl group of tRNA-bound glutamate with the formation of a thioester intermediate between enzyme and glutamate, and the concomitant release of tRNA(Glu). The thioester intermediate is finally reduced by direct hydride transfer from NADPH, to form the product GSA.</text>
</comment>
<comment type="similarity">
    <text evidence="1">Belongs to the glutamyl-tRNA reductase family.</text>
</comment>
<protein>
    <recommendedName>
        <fullName evidence="1">Glutamyl-tRNA reductase 2</fullName>
        <shortName evidence="1">GluTR 2</shortName>
        <ecNumber evidence="1">1.2.1.70</ecNumber>
    </recommendedName>
</protein>
<reference key="1">
    <citation type="journal article" date="2009" name="Appl. Environ. Microbiol.">
        <title>Novel features of the polysaccharide-digesting gliding bacterium Flavobacterium johnsoniae as revealed by genome sequence analysis.</title>
        <authorList>
            <person name="McBride M.J."/>
            <person name="Xie G."/>
            <person name="Martens E.C."/>
            <person name="Lapidus A."/>
            <person name="Henrissat B."/>
            <person name="Rhodes R.G."/>
            <person name="Goltsman E."/>
            <person name="Wang W."/>
            <person name="Xu J."/>
            <person name="Hunnicutt D.W."/>
            <person name="Staroscik A.M."/>
            <person name="Hoover T.R."/>
            <person name="Cheng Y.Q."/>
            <person name="Stein J.L."/>
        </authorList>
    </citation>
    <scope>NUCLEOTIDE SEQUENCE [LARGE SCALE GENOMIC DNA]</scope>
    <source>
        <strain>ATCC 17061 / DSM 2064 / JCM 8514 / BCRC 14874 / CCUG 350202 / NBRC 14942 / NCIMB 11054 / UW101</strain>
    </source>
</reference>
<evidence type="ECO:0000255" key="1">
    <source>
        <dbReference type="HAMAP-Rule" id="MF_00087"/>
    </source>
</evidence>
<name>HEM12_FLAJ1</name>
<feature type="chain" id="PRO_0000335033" description="Glutamyl-tRNA reductase 2">
    <location>
        <begin position="1"/>
        <end position="434"/>
    </location>
</feature>
<feature type="active site" description="Nucleophile" evidence="1">
    <location>
        <position position="58"/>
    </location>
</feature>
<feature type="binding site" evidence="1">
    <location>
        <begin position="57"/>
        <end position="60"/>
    </location>
    <ligand>
        <name>substrate</name>
    </ligand>
</feature>
<feature type="binding site" evidence="1">
    <location>
        <position position="113"/>
    </location>
    <ligand>
        <name>substrate</name>
    </ligand>
</feature>
<feature type="binding site" evidence="1">
    <location>
        <begin position="118"/>
        <end position="120"/>
    </location>
    <ligand>
        <name>substrate</name>
    </ligand>
</feature>
<feature type="binding site" evidence="1">
    <location>
        <position position="124"/>
    </location>
    <ligand>
        <name>substrate</name>
    </ligand>
</feature>
<feature type="binding site" evidence="1">
    <location>
        <begin position="193"/>
        <end position="198"/>
    </location>
    <ligand>
        <name>NADP(+)</name>
        <dbReference type="ChEBI" id="CHEBI:58349"/>
    </ligand>
</feature>
<feature type="site" description="Important for activity" evidence="1">
    <location>
        <position position="103"/>
    </location>
</feature>
<sequence length="434" mass="48167">MENFNMPRSTTFYALGLSYKKADAVIRGKFSLDAQAQSDLLLQAKAEGIESLVVTSTCNRTEIYGFAHHPYELIKLLCENSNGSIEEFQQAAYIYKNEEAVSHMFRVGTGLDSQILGDFEIISQIKTAFNNSKQEGLVNTFLDRLVNTVIQASKKVKTETKISSGATSVSFASVQYIIRNVADIGSKNILLFGTGKIGRNTCENLVKHTKNSHITLINRTKNKAELLAGKLNVIVKDYADLKQELHQADVLVVATGAQNPTIDKASLALQKPLLILDLSIPRNVDANVEEIPGVTLIHLDALSQITDDTLERRKQHIPAAEAIIDDMKLELNTWVNGRKCAPTIHALKSKLNDIVSAEFAFQKKKITHFDDAQMDLISSRIIQKLTNHFASHLKNENTSVDQSIEFIEKIFQIGQLAPNKTSSPIADKYKINLS</sequence>
<gene>
    <name evidence="1" type="primary">hemA2</name>
    <name type="ordered locus">Fjoh_3752</name>
</gene>
<dbReference type="EC" id="1.2.1.70" evidence="1"/>
<dbReference type="EMBL" id="CP000685">
    <property type="protein sequence ID" value="ABQ06765.1"/>
    <property type="molecule type" value="Genomic_DNA"/>
</dbReference>
<dbReference type="RefSeq" id="WP_012025731.1">
    <property type="nucleotide sequence ID" value="NC_009441.1"/>
</dbReference>
<dbReference type="SMR" id="A5FDF9"/>
<dbReference type="STRING" id="376686.Fjoh_3752"/>
<dbReference type="KEGG" id="fjo:Fjoh_3752"/>
<dbReference type="eggNOG" id="COG0373">
    <property type="taxonomic scope" value="Bacteria"/>
</dbReference>
<dbReference type="HOGENOM" id="CLU_035113_2_2_10"/>
<dbReference type="OrthoDB" id="110209at2"/>
<dbReference type="UniPathway" id="UPA00251">
    <property type="reaction ID" value="UER00316"/>
</dbReference>
<dbReference type="Proteomes" id="UP000006694">
    <property type="component" value="Chromosome"/>
</dbReference>
<dbReference type="GO" id="GO:0008883">
    <property type="term" value="F:glutamyl-tRNA reductase activity"/>
    <property type="evidence" value="ECO:0007669"/>
    <property type="project" value="UniProtKB-UniRule"/>
</dbReference>
<dbReference type="GO" id="GO:0050661">
    <property type="term" value="F:NADP binding"/>
    <property type="evidence" value="ECO:0007669"/>
    <property type="project" value="InterPro"/>
</dbReference>
<dbReference type="GO" id="GO:0019353">
    <property type="term" value="P:protoporphyrinogen IX biosynthetic process from glutamate"/>
    <property type="evidence" value="ECO:0007669"/>
    <property type="project" value="TreeGrafter"/>
</dbReference>
<dbReference type="CDD" id="cd05213">
    <property type="entry name" value="NAD_bind_Glutamyl_tRNA_reduct"/>
    <property type="match status" value="1"/>
</dbReference>
<dbReference type="FunFam" id="3.30.460.30:FF:000001">
    <property type="entry name" value="Glutamyl-tRNA reductase"/>
    <property type="match status" value="1"/>
</dbReference>
<dbReference type="Gene3D" id="3.30.460.30">
    <property type="entry name" value="Glutamyl-tRNA reductase, N-terminal domain"/>
    <property type="match status" value="1"/>
</dbReference>
<dbReference type="Gene3D" id="3.40.50.720">
    <property type="entry name" value="NAD(P)-binding Rossmann-like Domain"/>
    <property type="match status" value="1"/>
</dbReference>
<dbReference type="HAMAP" id="MF_00087">
    <property type="entry name" value="Glu_tRNA_reductase"/>
    <property type="match status" value="1"/>
</dbReference>
<dbReference type="InterPro" id="IPR000343">
    <property type="entry name" value="4pyrrol_synth_GluRdtase"/>
</dbReference>
<dbReference type="InterPro" id="IPR015896">
    <property type="entry name" value="4pyrrol_synth_GluRdtase_dimer"/>
</dbReference>
<dbReference type="InterPro" id="IPR015895">
    <property type="entry name" value="4pyrrol_synth_GluRdtase_N"/>
</dbReference>
<dbReference type="InterPro" id="IPR018214">
    <property type="entry name" value="GluRdtase_CS"/>
</dbReference>
<dbReference type="InterPro" id="IPR036453">
    <property type="entry name" value="GluRdtase_dimer_dom_sf"/>
</dbReference>
<dbReference type="InterPro" id="IPR036343">
    <property type="entry name" value="GluRdtase_N_sf"/>
</dbReference>
<dbReference type="InterPro" id="IPR036291">
    <property type="entry name" value="NAD(P)-bd_dom_sf"/>
</dbReference>
<dbReference type="InterPro" id="IPR006151">
    <property type="entry name" value="Shikm_DH/Glu-tRNA_Rdtase"/>
</dbReference>
<dbReference type="NCBIfam" id="TIGR01035">
    <property type="entry name" value="hemA"/>
    <property type="match status" value="1"/>
</dbReference>
<dbReference type="PANTHER" id="PTHR43013">
    <property type="entry name" value="GLUTAMYL-TRNA REDUCTASE"/>
    <property type="match status" value="1"/>
</dbReference>
<dbReference type="PANTHER" id="PTHR43013:SF1">
    <property type="entry name" value="GLUTAMYL-TRNA REDUCTASE"/>
    <property type="match status" value="1"/>
</dbReference>
<dbReference type="Pfam" id="PF00745">
    <property type="entry name" value="GlutR_dimer"/>
    <property type="match status" value="1"/>
</dbReference>
<dbReference type="Pfam" id="PF05201">
    <property type="entry name" value="GlutR_N"/>
    <property type="match status" value="1"/>
</dbReference>
<dbReference type="Pfam" id="PF01488">
    <property type="entry name" value="Shikimate_DH"/>
    <property type="match status" value="1"/>
</dbReference>
<dbReference type="PIRSF" id="PIRSF000445">
    <property type="entry name" value="4pyrrol_synth_GluRdtase"/>
    <property type="match status" value="1"/>
</dbReference>
<dbReference type="SUPFAM" id="SSF69742">
    <property type="entry name" value="Glutamyl tRNA-reductase catalytic, N-terminal domain"/>
    <property type="match status" value="1"/>
</dbReference>
<dbReference type="SUPFAM" id="SSF69075">
    <property type="entry name" value="Glutamyl tRNA-reductase dimerization domain"/>
    <property type="match status" value="1"/>
</dbReference>
<dbReference type="SUPFAM" id="SSF51735">
    <property type="entry name" value="NAD(P)-binding Rossmann-fold domains"/>
    <property type="match status" value="1"/>
</dbReference>
<dbReference type="PROSITE" id="PS00747">
    <property type="entry name" value="GLUTR"/>
    <property type="match status" value="1"/>
</dbReference>